<reference key="1">
    <citation type="journal article" date="2013" name="Stand. Genomic Sci.">
        <title>Complete genome sequence of Arthrobacter sp. strain FB24.</title>
        <authorList>
            <person name="Nakatsu C.H."/>
            <person name="Barabote R."/>
            <person name="Thompson S."/>
            <person name="Bruce D."/>
            <person name="Detter C."/>
            <person name="Brettin T."/>
            <person name="Han C."/>
            <person name="Beasley F."/>
            <person name="Chen W."/>
            <person name="Konopka A."/>
            <person name="Xie G."/>
        </authorList>
    </citation>
    <scope>NUCLEOTIDE SEQUENCE [LARGE SCALE GENOMIC DNA]</scope>
    <source>
        <strain>FB24</strain>
    </source>
</reference>
<evidence type="ECO:0000255" key="1">
    <source>
        <dbReference type="HAMAP-Rule" id="MF_00022"/>
    </source>
</evidence>
<accession>A0JXY5</accession>
<sequence>MTTPSVSNAVSSPAVTAETPVRVRFCPSPTGTPHVGLIRTALFNWAYARHTQGTFVFRIEDTDAARDSEESYEQLLEALKWLGISWEEGVETGGPHEPYRQSQRLDLYKDVVAKLLEAGYAYECYSSPEEVEARHRAAGRDPKLGYDNFDRNLSAEQVAAFKAEGREPVLRVRMPDEDVTFTDMVRGEITFKAGSIPDYVIVRADGSPLYTLVNPVDDALMGITHVLRGEDLLSSTPRQVVLIRALMEIGVASYMPVFGHLPYVMGEGNKKLSKRDPQSNLFLLRDRGFIPEGLLNYLSLLGWSLSADEDIFTVEQLIEHFDVHDVLANPARFDIKKAEAINGTHIRMLDADDFRGRLVPYLRAANLVGETLTAREEEILTEAAPLIQERIALLGEAPEMISFLFKNDDAIDVADDARKGLPENLTEVLDAAIAALDAVADWSAESIQTALKQALVEDMGIKPRLAFGPVRTAVSGRRISPPLFESMVILGKASSLARLHAFRG</sequence>
<gene>
    <name evidence="1" type="primary">gltX</name>
    <name type="ordered locus">Arth_2526</name>
</gene>
<protein>
    <recommendedName>
        <fullName evidence="1">Glutamate--tRNA ligase</fullName>
        <ecNumber evidence="1">6.1.1.17</ecNumber>
    </recommendedName>
    <alternativeName>
        <fullName evidence="1">Glutamyl-tRNA synthetase</fullName>
        <shortName evidence="1">GluRS</shortName>
    </alternativeName>
</protein>
<name>SYE_ARTS2</name>
<proteinExistence type="inferred from homology"/>
<organism>
    <name type="scientific">Arthrobacter sp. (strain FB24)</name>
    <dbReference type="NCBI Taxonomy" id="290399"/>
    <lineage>
        <taxon>Bacteria</taxon>
        <taxon>Bacillati</taxon>
        <taxon>Actinomycetota</taxon>
        <taxon>Actinomycetes</taxon>
        <taxon>Micrococcales</taxon>
        <taxon>Micrococcaceae</taxon>
        <taxon>Arthrobacter</taxon>
    </lineage>
</organism>
<feature type="chain" id="PRO_0000367609" description="Glutamate--tRNA ligase">
    <location>
        <begin position="1"/>
        <end position="504"/>
    </location>
</feature>
<feature type="short sequence motif" description="'HIGH' region" evidence="1">
    <location>
        <begin position="27"/>
        <end position="37"/>
    </location>
</feature>
<feature type="short sequence motif" description="'KMSKS' region" evidence="1">
    <location>
        <begin position="271"/>
        <end position="275"/>
    </location>
</feature>
<feature type="binding site" evidence="1">
    <location>
        <position position="274"/>
    </location>
    <ligand>
        <name>ATP</name>
        <dbReference type="ChEBI" id="CHEBI:30616"/>
    </ligand>
</feature>
<comment type="function">
    <text evidence="1">Catalyzes the attachment of glutamate to tRNA(Glu) in a two-step reaction: glutamate is first activated by ATP to form Glu-AMP and then transferred to the acceptor end of tRNA(Glu).</text>
</comment>
<comment type="catalytic activity">
    <reaction evidence="1">
        <text>tRNA(Glu) + L-glutamate + ATP = L-glutamyl-tRNA(Glu) + AMP + diphosphate</text>
        <dbReference type="Rhea" id="RHEA:23540"/>
        <dbReference type="Rhea" id="RHEA-COMP:9663"/>
        <dbReference type="Rhea" id="RHEA-COMP:9680"/>
        <dbReference type="ChEBI" id="CHEBI:29985"/>
        <dbReference type="ChEBI" id="CHEBI:30616"/>
        <dbReference type="ChEBI" id="CHEBI:33019"/>
        <dbReference type="ChEBI" id="CHEBI:78442"/>
        <dbReference type="ChEBI" id="CHEBI:78520"/>
        <dbReference type="ChEBI" id="CHEBI:456215"/>
        <dbReference type="EC" id="6.1.1.17"/>
    </reaction>
</comment>
<comment type="subunit">
    <text evidence="1">Monomer.</text>
</comment>
<comment type="subcellular location">
    <subcellularLocation>
        <location evidence="1">Cytoplasm</location>
    </subcellularLocation>
</comment>
<comment type="similarity">
    <text evidence="1">Belongs to the class-I aminoacyl-tRNA synthetase family. Glutamate--tRNA ligase type 1 subfamily.</text>
</comment>
<keyword id="KW-0030">Aminoacyl-tRNA synthetase</keyword>
<keyword id="KW-0067">ATP-binding</keyword>
<keyword id="KW-0963">Cytoplasm</keyword>
<keyword id="KW-0436">Ligase</keyword>
<keyword id="KW-0547">Nucleotide-binding</keyword>
<keyword id="KW-0648">Protein biosynthesis</keyword>
<keyword id="KW-1185">Reference proteome</keyword>
<dbReference type="EC" id="6.1.1.17" evidence="1"/>
<dbReference type="EMBL" id="CP000454">
    <property type="protein sequence ID" value="ABK03905.1"/>
    <property type="molecule type" value="Genomic_DNA"/>
</dbReference>
<dbReference type="RefSeq" id="WP_011692367.1">
    <property type="nucleotide sequence ID" value="NC_008541.1"/>
</dbReference>
<dbReference type="SMR" id="A0JXY5"/>
<dbReference type="STRING" id="290399.Arth_2526"/>
<dbReference type="KEGG" id="art:Arth_2526"/>
<dbReference type="eggNOG" id="COG0008">
    <property type="taxonomic scope" value="Bacteria"/>
</dbReference>
<dbReference type="HOGENOM" id="CLU_015768_6_1_11"/>
<dbReference type="OrthoDB" id="9807503at2"/>
<dbReference type="Proteomes" id="UP000000754">
    <property type="component" value="Chromosome"/>
</dbReference>
<dbReference type="GO" id="GO:0005829">
    <property type="term" value="C:cytosol"/>
    <property type="evidence" value="ECO:0007669"/>
    <property type="project" value="TreeGrafter"/>
</dbReference>
<dbReference type="GO" id="GO:0005524">
    <property type="term" value="F:ATP binding"/>
    <property type="evidence" value="ECO:0007669"/>
    <property type="project" value="UniProtKB-UniRule"/>
</dbReference>
<dbReference type="GO" id="GO:0004818">
    <property type="term" value="F:glutamate-tRNA ligase activity"/>
    <property type="evidence" value="ECO:0007669"/>
    <property type="project" value="UniProtKB-UniRule"/>
</dbReference>
<dbReference type="GO" id="GO:0000049">
    <property type="term" value="F:tRNA binding"/>
    <property type="evidence" value="ECO:0007669"/>
    <property type="project" value="InterPro"/>
</dbReference>
<dbReference type="GO" id="GO:0008270">
    <property type="term" value="F:zinc ion binding"/>
    <property type="evidence" value="ECO:0007669"/>
    <property type="project" value="InterPro"/>
</dbReference>
<dbReference type="GO" id="GO:0006424">
    <property type="term" value="P:glutamyl-tRNA aminoacylation"/>
    <property type="evidence" value="ECO:0007669"/>
    <property type="project" value="UniProtKB-UniRule"/>
</dbReference>
<dbReference type="CDD" id="cd00808">
    <property type="entry name" value="GluRS_core"/>
    <property type="match status" value="1"/>
</dbReference>
<dbReference type="FunFam" id="3.40.50.620:FF:000149">
    <property type="entry name" value="Glutamate--tRNA ligase"/>
    <property type="match status" value="1"/>
</dbReference>
<dbReference type="Gene3D" id="1.10.10.350">
    <property type="match status" value="1"/>
</dbReference>
<dbReference type="Gene3D" id="1.10.8.70">
    <property type="entry name" value="Glutamate-tRNA synthetase, class I, anticodon-binding domain 1"/>
    <property type="match status" value="1"/>
</dbReference>
<dbReference type="Gene3D" id="3.40.50.620">
    <property type="entry name" value="HUPs"/>
    <property type="match status" value="1"/>
</dbReference>
<dbReference type="HAMAP" id="MF_00022">
    <property type="entry name" value="Glu_tRNA_synth_type1"/>
    <property type="match status" value="1"/>
</dbReference>
<dbReference type="InterPro" id="IPR045462">
    <property type="entry name" value="aa-tRNA-synth_I_cd-bd"/>
</dbReference>
<dbReference type="InterPro" id="IPR020751">
    <property type="entry name" value="aa-tRNA-synth_I_codon-bd_sub2"/>
</dbReference>
<dbReference type="InterPro" id="IPR008925">
    <property type="entry name" value="aa_tRNA-synth_I_cd-bd_sf"/>
</dbReference>
<dbReference type="InterPro" id="IPR004527">
    <property type="entry name" value="Glu-tRNA-ligase_bac/mito"/>
</dbReference>
<dbReference type="InterPro" id="IPR020752">
    <property type="entry name" value="Glu-tRNA-synth_I_codon-bd_sub1"/>
</dbReference>
<dbReference type="InterPro" id="IPR000924">
    <property type="entry name" value="Glu/Gln-tRNA-synth"/>
</dbReference>
<dbReference type="InterPro" id="IPR020058">
    <property type="entry name" value="Glu/Gln-tRNA-synth_Ib_cat-dom"/>
</dbReference>
<dbReference type="InterPro" id="IPR049940">
    <property type="entry name" value="GluQ/Sye"/>
</dbReference>
<dbReference type="InterPro" id="IPR033910">
    <property type="entry name" value="GluRS_core"/>
</dbReference>
<dbReference type="InterPro" id="IPR014729">
    <property type="entry name" value="Rossmann-like_a/b/a_fold"/>
</dbReference>
<dbReference type="NCBIfam" id="TIGR00464">
    <property type="entry name" value="gltX_bact"/>
    <property type="match status" value="1"/>
</dbReference>
<dbReference type="PANTHER" id="PTHR43311">
    <property type="entry name" value="GLUTAMATE--TRNA LIGASE"/>
    <property type="match status" value="1"/>
</dbReference>
<dbReference type="PANTHER" id="PTHR43311:SF2">
    <property type="entry name" value="GLUTAMATE--TRNA LIGASE, MITOCHONDRIAL-RELATED"/>
    <property type="match status" value="1"/>
</dbReference>
<dbReference type="Pfam" id="PF19269">
    <property type="entry name" value="Anticodon_2"/>
    <property type="match status" value="1"/>
</dbReference>
<dbReference type="Pfam" id="PF00749">
    <property type="entry name" value="tRNA-synt_1c"/>
    <property type="match status" value="1"/>
</dbReference>
<dbReference type="PRINTS" id="PR00987">
    <property type="entry name" value="TRNASYNTHGLU"/>
</dbReference>
<dbReference type="SUPFAM" id="SSF48163">
    <property type="entry name" value="An anticodon-binding domain of class I aminoacyl-tRNA synthetases"/>
    <property type="match status" value="1"/>
</dbReference>
<dbReference type="SUPFAM" id="SSF52374">
    <property type="entry name" value="Nucleotidylyl transferase"/>
    <property type="match status" value="1"/>
</dbReference>